<evidence type="ECO:0000250" key="1"/>
<evidence type="ECO:0000305" key="2"/>
<organism>
    <name type="scientific">Arabidopsis thaliana</name>
    <name type="common">Mouse-ear cress</name>
    <dbReference type="NCBI Taxonomy" id="3702"/>
    <lineage>
        <taxon>Eukaryota</taxon>
        <taxon>Viridiplantae</taxon>
        <taxon>Streptophyta</taxon>
        <taxon>Embryophyta</taxon>
        <taxon>Tracheophyta</taxon>
        <taxon>Spermatophyta</taxon>
        <taxon>Magnoliopsida</taxon>
        <taxon>eudicotyledons</taxon>
        <taxon>Gunneridae</taxon>
        <taxon>Pentapetalae</taxon>
        <taxon>rosids</taxon>
        <taxon>malvids</taxon>
        <taxon>Brassicales</taxon>
        <taxon>Brassicaceae</taxon>
        <taxon>Camelineae</taxon>
        <taxon>Arabidopsis</taxon>
    </lineage>
</organism>
<name>RAA1E_ARATH</name>
<dbReference type="EMBL" id="AL021710">
    <property type="protein sequence ID" value="CAA16723.1"/>
    <property type="molecule type" value="Genomic_DNA"/>
</dbReference>
<dbReference type="EMBL" id="AL161548">
    <property type="protein sequence ID" value="CAB78845.1"/>
    <property type="molecule type" value="Genomic_DNA"/>
</dbReference>
<dbReference type="EMBL" id="CP002687">
    <property type="protein sequence ID" value="AEE84045.1"/>
    <property type="molecule type" value="Genomic_DNA"/>
</dbReference>
<dbReference type="EMBL" id="BT010933">
    <property type="protein sequence ID" value="AAR24711.1"/>
    <property type="molecule type" value="mRNA"/>
</dbReference>
<dbReference type="EMBL" id="BT011645">
    <property type="protein sequence ID" value="AAS47651.1"/>
    <property type="molecule type" value="mRNA"/>
</dbReference>
<dbReference type="PIR" id="T04539">
    <property type="entry name" value="T04539"/>
</dbReference>
<dbReference type="RefSeq" id="NP_193578.1">
    <property type="nucleotide sequence ID" value="NM_117956.3"/>
</dbReference>
<dbReference type="SMR" id="O49513"/>
<dbReference type="BioGRID" id="12867">
    <property type="interactions" value="17"/>
</dbReference>
<dbReference type="FunCoup" id="O49513">
    <property type="interactions" value="2855"/>
</dbReference>
<dbReference type="STRING" id="3702.O49513"/>
<dbReference type="iPTMnet" id="O49513"/>
<dbReference type="PaxDb" id="3702-AT4G18430.1"/>
<dbReference type="ProteomicsDB" id="224875"/>
<dbReference type="EnsemblPlants" id="AT4G18430.1">
    <property type="protein sequence ID" value="AT4G18430.1"/>
    <property type="gene ID" value="AT4G18430"/>
</dbReference>
<dbReference type="GeneID" id="827574"/>
<dbReference type="Gramene" id="AT4G18430.1">
    <property type="protein sequence ID" value="AT4G18430.1"/>
    <property type="gene ID" value="AT4G18430"/>
</dbReference>
<dbReference type="KEGG" id="ath:AT4G18430"/>
<dbReference type="Araport" id="AT4G18430"/>
<dbReference type="TAIR" id="AT4G18430">
    <property type="gene designation" value="RABA1E"/>
</dbReference>
<dbReference type="eggNOG" id="KOG0087">
    <property type="taxonomic scope" value="Eukaryota"/>
</dbReference>
<dbReference type="HOGENOM" id="CLU_041217_23_0_1"/>
<dbReference type="InParanoid" id="O49513"/>
<dbReference type="OMA" id="HTEAYAV"/>
<dbReference type="OrthoDB" id="9989112at2759"/>
<dbReference type="PhylomeDB" id="O49513"/>
<dbReference type="PRO" id="PR:O49513"/>
<dbReference type="Proteomes" id="UP000006548">
    <property type="component" value="Chromosome 4"/>
</dbReference>
<dbReference type="ExpressionAtlas" id="O49513">
    <property type="expression patterns" value="baseline and differential"/>
</dbReference>
<dbReference type="GO" id="GO:0005829">
    <property type="term" value="C:cytosol"/>
    <property type="evidence" value="ECO:0007005"/>
    <property type="project" value="TAIR"/>
</dbReference>
<dbReference type="GO" id="GO:0005886">
    <property type="term" value="C:plasma membrane"/>
    <property type="evidence" value="ECO:0007669"/>
    <property type="project" value="UniProtKB-SubCell"/>
</dbReference>
<dbReference type="GO" id="GO:0005525">
    <property type="term" value="F:GTP binding"/>
    <property type="evidence" value="ECO:0007669"/>
    <property type="project" value="UniProtKB-KW"/>
</dbReference>
<dbReference type="GO" id="GO:0003924">
    <property type="term" value="F:GTPase activity"/>
    <property type="evidence" value="ECO:0007669"/>
    <property type="project" value="InterPro"/>
</dbReference>
<dbReference type="GO" id="GO:0015031">
    <property type="term" value="P:protein transport"/>
    <property type="evidence" value="ECO:0007669"/>
    <property type="project" value="UniProtKB-KW"/>
</dbReference>
<dbReference type="CDD" id="cd01868">
    <property type="entry name" value="Rab11_like"/>
    <property type="match status" value="1"/>
</dbReference>
<dbReference type="FunFam" id="3.40.50.300:FF:000067">
    <property type="entry name" value="ras-related protein RABA1f"/>
    <property type="match status" value="1"/>
</dbReference>
<dbReference type="Gene3D" id="3.40.50.300">
    <property type="entry name" value="P-loop containing nucleotide triphosphate hydrolases"/>
    <property type="match status" value="1"/>
</dbReference>
<dbReference type="InterPro" id="IPR027417">
    <property type="entry name" value="P-loop_NTPase"/>
</dbReference>
<dbReference type="InterPro" id="IPR050209">
    <property type="entry name" value="Rab_GTPases_membrane_traffic"/>
</dbReference>
<dbReference type="InterPro" id="IPR005225">
    <property type="entry name" value="Small_GTP-bd"/>
</dbReference>
<dbReference type="InterPro" id="IPR001806">
    <property type="entry name" value="Small_GTPase"/>
</dbReference>
<dbReference type="NCBIfam" id="TIGR00231">
    <property type="entry name" value="small_GTP"/>
    <property type="match status" value="1"/>
</dbReference>
<dbReference type="PANTHER" id="PTHR47979">
    <property type="entry name" value="DRAB11-RELATED"/>
    <property type="match status" value="1"/>
</dbReference>
<dbReference type="Pfam" id="PF00071">
    <property type="entry name" value="Ras"/>
    <property type="match status" value="1"/>
</dbReference>
<dbReference type="PRINTS" id="PR00449">
    <property type="entry name" value="RASTRNSFRMNG"/>
</dbReference>
<dbReference type="SMART" id="SM00175">
    <property type="entry name" value="RAB"/>
    <property type="match status" value="1"/>
</dbReference>
<dbReference type="SMART" id="SM00176">
    <property type="entry name" value="RAN"/>
    <property type="match status" value="1"/>
</dbReference>
<dbReference type="SMART" id="SM00173">
    <property type="entry name" value="RAS"/>
    <property type="match status" value="1"/>
</dbReference>
<dbReference type="SMART" id="SM00174">
    <property type="entry name" value="RHO"/>
    <property type="match status" value="1"/>
</dbReference>
<dbReference type="SUPFAM" id="SSF52540">
    <property type="entry name" value="P-loop containing nucleoside triphosphate hydrolases"/>
    <property type="match status" value="1"/>
</dbReference>
<dbReference type="PROSITE" id="PS51419">
    <property type="entry name" value="RAB"/>
    <property type="match status" value="1"/>
</dbReference>
<protein>
    <recommendedName>
        <fullName>Ras-related protein RABA1e</fullName>
        <shortName>AtRABA1e</shortName>
    </recommendedName>
</protein>
<sequence length="217" mass="24330">MGAYRADDDYDYLFKLVLIGDSGVGKSNLLSRFTRNEFSIESKSTIGVEFATRSVHVDEKIIKAQLWDTAGQERYRAITSAYYRGAVGALLVYDITRHITFENVERWLKELRDHTDANVVIMLVGNKADLRHLRAVPTEEARSFSERENMFFMETSALDATNVEQAFTHVLTQIYRVMSRKALDGTGDPMSLPKGQTIDIGNKDDVTAVKSSGCCSG</sequence>
<gene>
    <name type="primary">RABA1E</name>
    <name type="ordered locus">At4g18430</name>
    <name type="ORF">F28J12.90</name>
</gene>
<feature type="chain" id="PRO_0000407336" description="Ras-related protein RABA1e">
    <location>
        <begin position="1"/>
        <end position="217"/>
    </location>
</feature>
<feature type="short sequence motif" description="Effector region" evidence="1">
    <location>
        <begin position="42"/>
        <end position="50"/>
    </location>
</feature>
<feature type="binding site" evidence="1">
    <location>
        <begin position="20"/>
        <end position="27"/>
    </location>
    <ligand>
        <name>GTP</name>
        <dbReference type="ChEBI" id="CHEBI:37565"/>
    </ligand>
</feature>
<feature type="binding site" evidence="1">
    <location>
        <begin position="68"/>
        <end position="72"/>
    </location>
    <ligand>
        <name>GTP</name>
        <dbReference type="ChEBI" id="CHEBI:37565"/>
    </ligand>
</feature>
<feature type="binding site" evidence="1">
    <location>
        <begin position="126"/>
        <end position="129"/>
    </location>
    <ligand>
        <name>GTP</name>
        <dbReference type="ChEBI" id="CHEBI:37565"/>
    </ligand>
</feature>
<feature type="binding site" evidence="1">
    <location>
        <begin position="156"/>
        <end position="157"/>
    </location>
    <ligand>
        <name>GTP</name>
        <dbReference type="ChEBI" id="CHEBI:37565"/>
    </ligand>
</feature>
<feature type="lipid moiety-binding region" description="S-geranylgeranyl cysteine" evidence="1">
    <location>
        <position position="214"/>
    </location>
</feature>
<feature type="lipid moiety-binding region" description="S-geranylgeranyl cysteine" evidence="1">
    <location>
        <position position="215"/>
    </location>
</feature>
<comment type="function">
    <text evidence="1">Intracellular vesicle trafficking and protein transport.</text>
</comment>
<comment type="subcellular location">
    <subcellularLocation>
        <location evidence="2">Cell membrane</location>
        <topology evidence="2">Lipid-anchor</topology>
        <orientation evidence="2">Cytoplasmic side</orientation>
    </subcellularLocation>
</comment>
<comment type="similarity">
    <text evidence="2">Belongs to the small GTPase superfamily. Rab family.</text>
</comment>
<keyword id="KW-1003">Cell membrane</keyword>
<keyword id="KW-0342">GTP-binding</keyword>
<keyword id="KW-0449">Lipoprotein</keyword>
<keyword id="KW-0472">Membrane</keyword>
<keyword id="KW-0547">Nucleotide-binding</keyword>
<keyword id="KW-0636">Prenylation</keyword>
<keyword id="KW-0653">Protein transport</keyword>
<keyword id="KW-1185">Reference proteome</keyword>
<keyword id="KW-0813">Transport</keyword>
<proteinExistence type="evidence at transcript level"/>
<reference key="1">
    <citation type="journal article" date="1999" name="Nature">
        <title>Sequence and analysis of chromosome 4 of the plant Arabidopsis thaliana.</title>
        <authorList>
            <person name="Mayer K.F.X."/>
            <person name="Schueller C."/>
            <person name="Wambutt R."/>
            <person name="Murphy G."/>
            <person name="Volckaert G."/>
            <person name="Pohl T."/>
            <person name="Duesterhoeft A."/>
            <person name="Stiekema W."/>
            <person name="Entian K.-D."/>
            <person name="Terryn N."/>
            <person name="Harris B."/>
            <person name="Ansorge W."/>
            <person name="Brandt P."/>
            <person name="Grivell L.A."/>
            <person name="Rieger M."/>
            <person name="Weichselgartner M."/>
            <person name="de Simone V."/>
            <person name="Obermaier B."/>
            <person name="Mache R."/>
            <person name="Mueller M."/>
            <person name="Kreis M."/>
            <person name="Delseny M."/>
            <person name="Puigdomenech P."/>
            <person name="Watson M."/>
            <person name="Schmidtheini T."/>
            <person name="Reichert B."/>
            <person name="Portetelle D."/>
            <person name="Perez-Alonso M."/>
            <person name="Boutry M."/>
            <person name="Bancroft I."/>
            <person name="Vos P."/>
            <person name="Hoheisel J."/>
            <person name="Zimmermann W."/>
            <person name="Wedler H."/>
            <person name="Ridley P."/>
            <person name="Langham S.-A."/>
            <person name="McCullagh B."/>
            <person name="Bilham L."/>
            <person name="Robben J."/>
            <person name="van der Schueren J."/>
            <person name="Grymonprez B."/>
            <person name="Chuang Y.-J."/>
            <person name="Vandenbussche F."/>
            <person name="Braeken M."/>
            <person name="Weltjens I."/>
            <person name="Voet M."/>
            <person name="Bastiaens I."/>
            <person name="Aert R."/>
            <person name="Defoor E."/>
            <person name="Weitzenegger T."/>
            <person name="Bothe G."/>
            <person name="Ramsperger U."/>
            <person name="Hilbert H."/>
            <person name="Braun M."/>
            <person name="Holzer E."/>
            <person name="Brandt A."/>
            <person name="Peters S."/>
            <person name="van Staveren M."/>
            <person name="Dirkse W."/>
            <person name="Mooijman P."/>
            <person name="Klein Lankhorst R."/>
            <person name="Rose M."/>
            <person name="Hauf J."/>
            <person name="Koetter P."/>
            <person name="Berneiser S."/>
            <person name="Hempel S."/>
            <person name="Feldpausch M."/>
            <person name="Lamberth S."/>
            <person name="Van den Daele H."/>
            <person name="De Keyser A."/>
            <person name="Buysshaert C."/>
            <person name="Gielen J."/>
            <person name="Villarroel R."/>
            <person name="De Clercq R."/>
            <person name="van Montagu M."/>
            <person name="Rogers J."/>
            <person name="Cronin A."/>
            <person name="Quail M.A."/>
            <person name="Bray-Allen S."/>
            <person name="Clark L."/>
            <person name="Doggett J."/>
            <person name="Hall S."/>
            <person name="Kay M."/>
            <person name="Lennard N."/>
            <person name="McLay K."/>
            <person name="Mayes R."/>
            <person name="Pettett A."/>
            <person name="Rajandream M.A."/>
            <person name="Lyne M."/>
            <person name="Benes V."/>
            <person name="Rechmann S."/>
            <person name="Borkova D."/>
            <person name="Bloecker H."/>
            <person name="Scharfe M."/>
            <person name="Grimm M."/>
            <person name="Loehnert T.-H."/>
            <person name="Dose S."/>
            <person name="de Haan M."/>
            <person name="Maarse A.C."/>
            <person name="Schaefer M."/>
            <person name="Mueller-Auer S."/>
            <person name="Gabel C."/>
            <person name="Fuchs M."/>
            <person name="Fartmann B."/>
            <person name="Granderath K."/>
            <person name="Dauner D."/>
            <person name="Herzl A."/>
            <person name="Neumann S."/>
            <person name="Argiriou A."/>
            <person name="Vitale D."/>
            <person name="Liguori R."/>
            <person name="Piravandi E."/>
            <person name="Massenet O."/>
            <person name="Quigley F."/>
            <person name="Clabauld G."/>
            <person name="Muendlein A."/>
            <person name="Felber R."/>
            <person name="Schnabl S."/>
            <person name="Hiller R."/>
            <person name="Schmidt W."/>
            <person name="Lecharny A."/>
            <person name="Aubourg S."/>
            <person name="Chefdor F."/>
            <person name="Cooke R."/>
            <person name="Berger C."/>
            <person name="Monfort A."/>
            <person name="Casacuberta E."/>
            <person name="Gibbons T."/>
            <person name="Weber N."/>
            <person name="Vandenbol M."/>
            <person name="Bargues M."/>
            <person name="Terol J."/>
            <person name="Torres A."/>
            <person name="Perez-Perez A."/>
            <person name="Purnelle B."/>
            <person name="Bent E."/>
            <person name="Johnson S."/>
            <person name="Tacon D."/>
            <person name="Jesse T."/>
            <person name="Heijnen L."/>
            <person name="Schwarz S."/>
            <person name="Scholler P."/>
            <person name="Heber S."/>
            <person name="Francs P."/>
            <person name="Bielke C."/>
            <person name="Frishman D."/>
            <person name="Haase D."/>
            <person name="Lemcke K."/>
            <person name="Mewes H.-W."/>
            <person name="Stocker S."/>
            <person name="Zaccaria P."/>
            <person name="Bevan M."/>
            <person name="Wilson R.K."/>
            <person name="de la Bastide M."/>
            <person name="Habermann K."/>
            <person name="Parnell L."/>
            <person name="Dedhia N."/>
            <person name="Gnoj L."/>
            <person name="Schutz K."/>
            <person name="Huang E."/>
            <person name="Spiegel L."/>
            <person name="Sekhon M."/>
            <person name="Murray J."/>
            <person name="Sheet P."/>
            <person name="Cordes M."/>
            <person name="Abu-Threideh J."/>
            <person name="Stoneking T."/>
            <person name="Kalicki J."/>
            <person name="Graves T."/>
            <person name="Harmon G."/>
            <person name="Edwards J."/>
            <person name="Latreille P."/>
            <person name="Courtney L."/>
            <person name="Cloud J."/>
            <person name="Abbott A."/>
            <person name="Scott K."/>
            <person name="Johnson D."/>
            <person name="Minx P."/>
            <person name="Bentley D."/>
            <person name="Fulton B."/>
            <person name="Miller N."/>
            <person name="Greco T."/>
            <person name="Kemp K."/>
            <person name="Kramer J."/>
            <person name="Fulton L."/>
            <person name="Mardis E."/>
            <person name="Dante M."/>
            <person name="Pepin K."/>
            <person name="Hillier L.W."/>
            <person name="Nelson J."/>
            <person name="Spieth J."/>
            <person name="Ryan E."/>
            <person name="Andrews S."/>
            <person name="Geisel C."/>
            <person name="Layman D."/>
            <person name="Du H."/>
            <person name="Ali J."/>
            <person name="Berghoff A."/>
            <person name="Jones K."/>
            <person name="Drone K."/>
            <person name="Cotton M."/>
            <person name="Joshu C."/>
            <person name="Antonoiu B."/>
            <person name="Zidanic M."/>
            <person name="Strong C."/>
            <person name="Sun H."/>
            <person name="Lamar B."/>
            <person name="Yordan C."/>
            <person name="Ma P."/>
            <person name="Zhong J."/>
            <person name="Preston R."/>
            <person name="Vil D."/>
            <person name="Shekher M."/>
            <person name="Matero A."/>
            <person name="Shah R."/>
            <person name="Swaby I.K."/>
            <person name="O'Shaughnessy A."/>
            <person name="Rodriguez M."/>
            <person name="Hoffman J."/>
            <person name="Till S."/>
            <person name="Granat S."/>
            <person name="Shohdy N."/>
            <person name="Hasegawa A."/>
            <person name="Hameed A."/>
            <person name="Lodhi M."/>
            <person name="Johnson A."/>
            <person name="Chen E."/>
            <person name="Marra M.A."/>
            <person name="Martienssen R."/>
            <person name="McCombie W.R."/>
        </authorList>
    </citation>
    <scope>NUCLEOTIDE SEQUENCE [LARGE SCALE GENOMIC DNA]</scope>
    <source>
        <strain>cv. Columbia</strain>
    </source>
</reference>
<reference key="2">
    <citation type="journal article" date="2017" name="Plant J.">
        <title>Araport11: a complete reannotation of the Arabidopsis thaliana reference genome.</title>
        <authorList>
            <person name="Cheng C.Y."/>
            <person name="Krishnakumar V."/>
            <person name="Chan A.P."/>
            <person name="Thibaud-Nissen F."/>
            <person name="Schobel S."/>
            <person name="Town C.D."/>
        </authorList>
    </citation>
    <scope>GENOME REANNOTATION</scope>
    <source>
        <strain>cv. Columbia</strain>
    </source>
</reference>
<reference key="3">
    <citation type="submission" date="2003-12" db="EMBL/GenBank/DDBJ databases">
        <title>Arabidopsis cDNA clones.</title>
        <authorList>
            <person name="Kim C.J."/>
            <person name="Chen H."/>
            <person name="Cheuk R.F."/>
            <person name="Shinn P."/>
            <person name="Ecker J.R."/>
        </authorList>
    </citation>
    <scope>NUCLEOTIDE SEQUENCE [LARGE SCALE MRNA]</scope>
    <source>
        <strain>cv. Columbia</strain>
    </source>
</reference>
<reference key="4">
    <citation type="submission" date="2004-02" db="EMBL/GenBank/DDBJ databases">
        <title>Arabidopsis ORF clones.</title>
        <authorList>
            <person name="Kim C.J."/>
            <person name="Chen H."/>
            <person name="Cheuk R.F."/>
            <person name="Shinn P."/>
            <person name="Ecker J.R."/>
        </authorList>
    </citation>
    <scope>NUCLEOTIDE SEQUENCE [LARGE SCALE MRNA]</scope>
    <source>
        <strain>cv. Columbia</strain>
    </source>
</reference>
<reference key="5">
    <citation type="journal article" date="2003" name="Plant Physiol.">
        <title>Analysis of the small GTPase gene superfamily of Arabidopsis.</title>
        <authorList>
            <person name="Vernoud V."/>
            <person name="Horton A.C."/>
            <person name="Yang Z."/>
            <person name="Nielsen E."/>
        </authorList>
    </citation>
    <scope>GENE FAMILY</scope>
    <scope>NOMENCLATURE</scope>
</reference>
<accession>O49513</accession>